<sequence>MSNFIVGLTGGIASGKSALAAEFEKLGVPVVDADVVARQVVAPGLILDAITNRFGQGILLPDGTLDRQALRKIVFADPTERRALEAITHPAIRTELQRAAKAANHPYAIVAIPLLAEAGARATYPWLDRILVVDVPVALQHARLMQRDGSTSALAGQMIAAQASRAQRLAIADDVVSNEGNTDQLAQQAQRLDATYRAALQTHRIEN</sequence>
<name>COAE_XANC8</name>
<feature type="chain" id="PRO_0000243364" description="Dephospho-CoA kinase">
    <location>
        <begin position="1"/>
        <end position="207"/>
    </location>
</feature>
<feature type="domain" description="DPCK" evidence="1">
    <location>
        <begin position="5"/>
        <end position="207"/>
    </location>
</feature>
<feature type="binding site" evidence="1">
    <location>
        <begin position="13"/>
        <end position="18"/>
    </location>
    <ligand>
        <name>ATP</name>
        <dbReference type="ChEBI" id="CHEBI:30616"/>
    </ligand>
</feature>
<accession>Q4UXU8</accession>
<dbReference type="EC" id="2.7.1.24" evidence="1"/>
<dbReference type="EMBL" id="CP000050">
    <property type="protein sequence ID" value="AAY48125.1"/>
    <property type="molecule type" value="Genomic_DNA"/>
</dbReference>
<dbReference type="RefSeq" id="WP_011038217.1">
    <property type="nucleotide sequence ID" value="NZ_CP155948.1"/>
</dbReference>
<dbReference type="SMR" id="Q4UXU8"/>
<dbReference type="KEGG" id="xcb:XC_1055"/>
<dbReference type="HOGENOM" id="CLU_057180_1_2_6"/>
<dbReference type="UniPathway" id="UPA00241">
    <property type="reaction ID" value="UER00356"/>
</dbReference>
<dbReference type="Proteomes" id="UP000000420">
    <property type="component" value="Chromosome"/>
</dbReference>
<dbReference type="GO" id="GO:0005737">
    <property type="term" value="C:cytoplasm"/>
    <property type="evidence" value="ECO:0007669"/>
    <property type="project" value="UniProtKB-SubCell"/>
</dbReference>
<dbReference type="GO" id="GO:0005524">
    <property type="term" value="F:ATP binding"/>
    <property type="evidence" value="ECO:0007669"/>
    <property type="project" value="UniProtKB-UniRule"/>
</dbReference>
<dbReference type="GO" id="GO:0004140">
    <property type="term" value="F:dephospho-CoA kinase activity"/>
    <property type="evidence" value="ECO:0007669"/>
    <property type="project" value="UniProtKB-UniRule"/>
</dbReference>
<dbReference type="GO" id="GO:0015937">
    <property type="term" value="P:coenzyme A biosynthetic process"/>
    <property type="evidence" value="ECO:0007669"/>
    <property type="project" value="UniProtKB-UniRule"/>
</dbReference>
<dbReference type="CDD" id="cd02022">
    <property type="entry name" value="DPCK"/>
    <property type="match status" value="1"/>
</dbReference>
<dbReference type="Gene3D" id="3.40.50.300">
    <property type="entry name" value="P-loop containing nucleotide triphosphate hydrolases"/>
    <property type="match status" value="1"/>
</dbReference>
<dbReference type="HAMAP" id="MF_00376">
    <property type="entry name" value="Dephospho_CoA_kinase"/>
    <property type="match status" value="1"/>
</dbReference>
<dbReference type="InterPro" id="IPR001977">
    <property type="entry name" value="Depp_CoAkinase"/>
</dbReference>
<dbReference type="InterPro" id="IPR027417">
    <property type="entry name" value="P-loop_NTPase"/>
</dbReference>
<dbReference type="NCBIfam" id="TIGR00152">
    <property type="entry name" value="dephospho-CoA kinase"/>
    <property type="match status" value="1"/>
</dbReference>
<dbReference type="PANTHER" id="PTHR10695:SF46">
    <property type="entry name" value="BIFUNCTIONAL COENZYME A SYNTHASE-RELATED"/>
    <property type="match status" value="1"/>
</dbReference>
<dbReference type="PANTHER" id="PTHR10695">
    <property type="entry name" value="DEPHOSPHO-COA KINASE-RELATED"/>
    <property type="match status" value="1"/>
</dbReference>
<dbReference type="Pfam" id="PF01121">
    <property type="entry name" value="CoaE"/>
    <property type="match status" value="1"/>
</dbReference>
<dbReference type="SUPFAM" id="SSF52540">
    <property type="entry name" value="P-loop containing nucleoside triphosphate hydrolases"/>
    <property type="match status" value="1"/>
</dbReference>
<dbReference type="PROSITE" id="PS51219">
    <property type="entry name" value="DPCK"/>
    <property type="match status" value="1"/>
</dbReference>
<proteinExistence type="inferred from homology"/>
<comment type="function">
    <text evidence="1">Catalyzes the phosphorylation of the 3'-hydroxyl group of dephosphocoenzyme A to form coenzyme A.</text>
</comment>
<comment type="catalytic activity">
    <reaction evidence="1">
        <text>3'-dephospho-CoA + ATP = ADP + CoA + H(+)</text>
        <dbReference type="Rhea" id="RHEA:18245"/>
        <dbReference type="ChEBI" id="CHEBI:15378"/>
        <dbReference type="ChEBI" id="CHEBI:30616"/>
        <dbReference type="ChEBI" id="CHEBI:57287"/>
        <dbReference type="ChEBI" id="CHEBI:57328"/>
        <dbReference type="ChEBI" id="CHEBI:456216"/>
        <dbReference type="EC" id="2.7.1.24"/>
    </reaction>
</comment>
<comment type="pathway">
    <text evidence="1">Cofactor biosynthesis; coenzyme A biosynthesis; CoA from (R)-pantothenate: step 5/5.</text>
</comment>
<comment type="subcellular location">
    <subcellularLocation>
        <location evidence="1">Cytoplasm</location>
    </subcellularLocation>
</comment>
<comment type="similarity">
    <text evidence="1">Belongs to the CoaE family.</text>
</comment>
<gene>
    <name evidence="1" type="primary">coaE</name>
    <name type="ordered locus">XC_1055</name>
</gene>
<keyword id="KW-0067">ATP-binding</keyword>
<keyword id="KW-0173">Coenzyme A biosynthesis</keyword>
<keyword id="KW-0963">Cytoplasm</keyword>
<keyword id="KW-0418">Kinase</keyword>
<keyword id="KW-0547">Nucleotide-binding</keyword>
<keyword id="KW-0808">Transferase</keyword>
<evidence type="ECO:0000255" key="1">
    <source>
        <dbReference type="HAMAP-Rule" id="MF_00376"/>
    </source>
</evidence>
<protein>
    <recommendedName>
        <fullName evidence="1">Dephospho-CoA kinase</fullName>
        <ecNumber evidence="1">2.7.1.24</ecNumber>
    </recommendedName>
    <alternativeName>
        <fullName evidence="1">Dephosphocoenzyme A kinase</fullName>
    </alternativeName>
</protein>
<organism>
    <name type="scientific">Xanthomonas campestris pv. campestris (strain 8004)</name>
    <dbReference type="NCBI Taxonomy" id="314565"/>
    <lineage>
        <taxon>Bacteria</taxon>
        <taxon>Pseudomonadati</taxon>
        <taxon>Pseudomonadota</taxon>
        <taxon>Gammaproteobacteria</taxon>
        <taxon>Lysobacterales</taxon>
        <taxon>Lysobacteraceae</taxon>
        <taxon>Xanthomonas</taxon>
    </lineage>
</organism>
<reference key="1">
    <citation type="journal article" date="2005" name="Genome Res.">
        <title>Comparative and functional genomic analyses of the pathogenicity of phytopathogen Xanthomonas campestris pv. campestris.</title>
        <authorList>
            <person name="Qian W."/>
            <person name="Jia Y."/>
            <person name="Ren S.-X."/>
            <person name="He Y.-Q."/>
            <person name="Feng J.-X."/>
            <person name="Lu L.-F."/>
            <person name="Sun Q."/>
            <person name="Ying G."/>
            <person name="Tang D.-J."/>
            <person name="Tang H."/>
            <person name="Wu W."/>
            <person name="Hao P."/>
            <person name="Wang L."/>
            <person name="Jiang B.-L."/>
            <person name="Zeng S."/>
            <person name="Gu W.-Y."/>
            <person name="Lu G."/>
            <person name="Rong L."/>
            <person name="Tian Y."/>
            <person name="Yao Z."/>
            <person name="Fu G."/>
            <person name="Chen B."/>
            <person name="Fang R."/>
            <person name="Qiang B."/>
            <person name="Chen Z."/>
            <person name="Zhao G.-P."/>
            <person name="Tang J.-L."/>
            <person name="He C."/>
        </authorList>
    </citation>
    <scope>NUCLEOTIDE SEQUENCE [LARGE SCALE GENOMIC DNA]</scope>
    <source>
        <strain>8004</strain>
    </source>
</reference>